<proteinExistence type="inferred from homology"/>
<accession>Q8YCY1</accession>
<protein>
    <recommendedName>
        <fullName evidence="1">Ornithine cyclodeaminase</fullName>
        <shortName evidence="1">OCD</shortName>
        <ecNumber evidence="2">4.3.1.12</ecNumber>
    </recommendedName>
</protein>
<keyword id="KW-0056">Arginine metabolism</keyword>
<keyword id="KW-0456">Lyase</keyword>
<keyword id="KW-0520">NAD</keyword>
<comment type="function">
    <text evidence="2">Catalyzes the conversion of L-ornithine into L-proline with release of ammonia.</text>
</comment>
<comment type="catalytic activity">
    <reaction evidence="2">
        <text>L-ornithine = L-proline + NH4(+)</text>
        <dbReference type="Rhea" id="RHEA:24368"/>
        <dbReference type="ChEBI" id="CHEBI:28938"/>
        <dbReference type="ChEBI" id="CHEBI:46911"/>
        <dbReference type="ChEBI" id="CHEBI:60039"/>
        <dbReference type="EC" id="4.3.1.12"/>
    </reaction>
</comment>
<comment type="cofactor">
    <cofactor evidence="2">
        <name>NAD(+)</name>
        <dbReference type="ChEBI" id="CHEBI:57540"/>
    </cofactor>
</comment>
<comment type="pathway">
    <text evidence="2">Amino-acid biosynthesis; L-proline biosynthesis; L-proline from L-ornithine: step 1/1.</text>
</comment>
<comment type="similarity">
    <text evidence="4">Belongs to the ornithine cyclodeaminase/mu-crystallin family.</text>
</comment>
<sequence length="359" mass="39460">MMTQPNLNIVPFVSVDHMMKLVLRVGVETFLKELAGYVEEDFRRWQNFDKTPRVASHSKEGVIELMPTSDGTLYGFKYVNGHPKNTRDGLQTVTAFGVLADVGSGYPMLLTEMTILTALRTAATSAVAAKHLAPKNARTMAIIGNSAQSEFQALAFKAILGVDKLRLYDLDPQATAKCIRNLQGAGFNIVACKSVEEAVEGADIITTVTADKANATILTDNMVGAGVHINAVGGDCPGKTELHGDILRRSDIFVEYPPQTRIEGEIQQLPEDYPVNELWEVITGRIAGRKDARQITLFDSVGFATEDFSALRYVRDKLKDTGLYEQLDLLADPDEPRDLYGMLLRHEKLLQSESTKPAA</sequence>
<reference key="1">
    <citation type="journal article" date="2002" name="Proc. Natl. Acad. Sci. U.S.A.">
        <title>The genome sequence of the facultative intracellular pathogen Brucella melitensis.</title>
        <authorList>
            <person name="DelVecchio V.G."/>
            <person name="Kapatral V."/>
            <person name="Redkar R.J."/>
            <person name="Patra G."/>
            <person name="Mujer C."/>
            <person name="Los T."/>
            <person name="Ivanova N."/>
            <person name="Anderson I."/>
            <person name="Bhattacharyya A."/>
            <person name="Lykidis A."/>
            <person name="Reznik G."/>
            <person name="Jablonski L."/>
            <person name="Larsen N."/>
            <person name="D'Souza M."/>
            <person name="Bernal A."/>
            <person name="Mazur M."/>
            <person name="Goltsman E."/>
            <person name="Selkov E."/>
            <person name="Elzer P.H."/>
            <person name="Hagius S."/>
            <person name="O'Callaghan D."/>
            <person name="Letesson J.-J."/>
            <person name="Haselkorn R."/>
            <person name="Kyrpides N.C."/>
            <person name="Overbeek R."/>
        </authorList>
    </citation>
    <scope>NUCLEOTIDE SEQUENCE [LARGE SCALE GENOMIC DNA]</scope>
    <source>
        <strain>ATCC 23456 / CCUG 17765 / NCTC 10094 / 16M</strain>
    </source>
</reference>
<organism>
    <name type="scientific">Brucella melitensis biotype 1 (strain ATCC 23456 / CCUG 17765 / NCTC 10094 / 16M)</name>
    <dbReference type="NCBI Taxonomy" id="224914"/>
    <lineage>
        <taxon>Bacteria</taxon>
        <taxon>Pseudomonadati</taxon>
        <taxon>Pseudomonadota</taxon>
        <taxon>Alphaproteobacteria</taxon>
        <taxon>Hyphomicrobiales</taxon>
        <taxon>Brucellaceae</taxon>
        <taxon>Brucella/Ochrobactrum group</taxon>
        <taxon>Brucella</taxon>
    </lineage>
</organism>
<gene>
    <name evidence="1" type="primary">ocd</name>
    <name type="ordered locus">BMEII0397</name>
</gene>
<feature type="chain" id="PRO_0000200671" description="Ornithine cyclodeaminase">
    <location>
        <begin position="1"/>
        <end position="359"/>
    </location>
</feature>
<feature type="active site" description="Proton donor/acceptor" evidence="3">
    <location>
        <position position="235"/>
    </location>
</feature>
<feature type="binding site" evidence="3">
    <location>
        <position position="53"/>
    </location>
    <ligand>
        <name>L-ornithine</name>
        <dbReference type="ChEBI" id="CHEBI:46911"/>
    </ligand>
</feature>
<feature type="binding site" evidence="3">
    <location>
        <position position="77"/>
    </location>
    <ligand>
        <name>L-ornithine</name>
        <dbReference type="ChEBI" id="CHEBI:46911"/>
    </ligand>
</feature>
<feature type="binding site" evidence="3">
    <location>
        <position position="92"/>
    </location>
    <ligand>
        <name>NAD(+)</name>
        <dbReference type="ChEBI" id="CHEBI:57540"/>
    </ligand>
</feature>
<feature type="binding site" evidence="3">
    <location>
        <position position="120"/>
    </location>
    <ligand>
        <name>L-ornithine</name>
        <dbReference type="ChEBI" id="CHEBI:46911"/>
    </ligand>
</feature>
<feature type="binding site" evidence="3">
    <location>
        <position position="120"/>
    </location>
    <ligand>
        <name>NAD(+)</name>
        <dbReference type="ChEBI" id="CHEBI:57540"/>
    </ligand>
</feature>
<feature type="binding site" evidence="3">
    <location>
        <begin position="147"/>
        <end position="148"/>
    </location>
    <ligand>
        <name>NAD(+)</name>
        <dbReference type="ChEBI" id="CHEBI:57540"/>
    </ligand>
</feature>
<feature type="binding site" evidence="3">
    <location>
        <position position="169"/>
    </location>
    <ligand>
        <name>NAD(+)</name>
        <dbReference type="ChEBI" id="CHEBI:57540"/>
    </ligand>
</feature>
<feature type="binding site" evidence="3">
    <location>
        <position position="209"/>
    </location>
    <ligand>
        <name>NAD(+)</name>
        <dbReference type="ChEBI" id="CHEBI:57540"/>
    </ligand>
</feature>
<feature type="binding site" evidence="3">
    <location>
        <begin position="232"/>
        <end position="235"/>
    </location>
    <ligand>
        <name>NAD(+)</name>
        <dbReference type="ChEBI" id="CHEBI:57540"/>
    </ligand>
</feature>
<feature type="binding site" evidence="3">
    <location>
        <position position="235"/>
    </location>
    <ligand>
        <name>L-ornithine</name>
        <dbReference type="ChEBI" id="CHEBI:46911"/>
    </ligand>
</feature>
<feature type="binding site" evidence="3">
    <location>
        <position position="239"/>
    </location>
    <ligand>
        <name>NAD(+)</name>
        <dbReference type="ChEBI" id="CHEBI:57540"/>
    </ligand>
</feature>
<feature type="binding site" evidence="3">
    <location>
        <position position="300"/>
    </location>
    <ligand>
        <name>NAD(+)</name>
        <dbReference type="ChEBI" id="CHEBI:57540"/>
    </ligand>
</feature>
<feature type="binding site" evidence="3">
    <location>
        <position position="301"/>
    </location>
    <ligand>
        <name>L-ornithine</name>
        <dbReference type="ChEBI" id="CHEBI:46911"/>
    </ligand>
</feature>
<name>OCD_BRUME</name>
<dbReference type="EC" id="4.3.1.12" evidence="2"/>
<dbReference type="EMBL" id="AE008918">
    <property type="protein sequence ID" value="AAL53639.1"/>
    <property type="molecule type" value="Genomic_DNA"/>
</dbReference>
<dbReference type="PIR" id="AD3559">
    <property type="entry name" value="AD3559"/>
</dbReference>
<dbReference type="SMR" id="Q8YCY1"/>
<dbReference type="KEGG" id="bme:BMEII0397"/>
<dbReference type="eggNOG" id="COG2423">
    <property type="taxonomic scope" value="Bacteria"/>
</dbReference>
<dbReference type="UniPathway" id="UPA00098">
    <property type="reaction ID" value="UER00357"/>
</dbReference>
<dbReference type="Proteomes" id="UP000000419">
    <property type="component" value="Chromosome II"/>
</dbReference>
<dbReference type="GO" id="GO:0008473">
    <property type="term" value="F:ornithine cyclodeaminase activity"/>
    <property type="evidence" value="ECO:0007669"/>
    <property type="project" value="UniProtKB-EC"/>
</dbReference>
<dbReference type="GO" id="GO:0006525">
    <property type="term" value="P:arginine metabolic process"/>
    <property type="evidence" value="ECO:0007669"/>
    <property type="project" value="UniProtKB-KW"/>
</dbReference>
<dbReference type="GO" id="GO:0055129">
    <property type="term" value="P:L-proline biosynthetic process"/>
    <property type="evidence" value="ECO:0007669"/>
    <property type="project" value="UniProtKB-UniPathway"/>
</dbReference>
<dbReference type="Gene3D" id="3.40.50.720">
    <property type="entry name" value="NAD(P)-binding Rossmann-like Domain"/>
    <property type="match status" value="1"/>
</dbReference>
<dbReference type="Gene3D" id="3.30.1780.10">
    <property type="entry name" value="ornithine cyclodeaminase, domain 1"/>
    <property type="match status" value="1"/>
</dbReference>
<dbReference type="InterPro" id="IPR036291">
    <property type="entry name" value="NAD(P)-bd_dom_sf"/>
</dbReference>
<dbReference type="InterPro" id="IPR003462">
    <property type="entry name" value="ODC_Mu_crystall"/>
</dbReference>
<dbReference type="InterPro" id="IPR023401">
    <property type="entry name" value="ODC_N"/>
</dbReference>
<dbReference type="NCBIfam" id="NF005762">
    <property type="entry name" value="PRK07589.1"/>
    <property type="match status" value="1"/>
</dbReference>
<dbReference type="PANTHER" id="PTHR13812">
    <property type="entry name" value="KETIMINE REDUCTASE MU-CRYSTALLIN"/>
    <property type="match status" value="1"/>
</dbReference>
<dbReference type="PANTHER" id="PTHR13812:SF19">
    <property type="entry name" value="KETIMINE REDUCTASE MU-CRYSTALLIN"/>
    <property type="match status" value="1"/>
</dbReference>
<dbReference type="Pfam" id="PF02423">
    <property type="entry name" value="OCD_Mu_crystall"/>
    <property type="match status" value="1"/>
</dbReference>
<dbReference type="SUPFAM" id="SSF51735">
    <property type="entry name" value="NAD(P)-binding Rossmann-fold domains"/>
    <property type="match status" value="1"/>
</dbReference>
<evidence type="ECO:0000250" key="1">
    <source>
        <dbReference type="UniProtKB" id="Q59175"/>
    </source>
</evidence>
<evidence type="ECO:0000250" key="2">
    <source>
        <dbReference type="UniProtKB" id="Q59701"/>
    </source>
</evidence>
<evidence type="ECO:0000250" key="3">
    <source>
        <dbReference type="UniProtKB" id="Q88H32"/>
    </source>
</evidence>
<evidence type="ECO:0000305" key="4"/>